<organism>
    <name type="scientific">Actinobacillus pleuropneumoniae serotype 5b (strain L20)</name>
    <dbReference type="NCBI Taxonomy" id="416269"/>
    <lineage>
        <taxon>Bacteria</taxon>
        <taxon>Pseudomonadati</taxon>
        <taxon>Pseudomonadota</taxon>
        <taxon>Gammaproteobacteria</taxon>
        <taxon>Pasteurellales</taxon>
        <taxon>Pasteurellaceae</taxon>
        <taxon>Actinobacillus</taxon>
    </lineage>
</organism>
<name>Y966_ACTP2</name>
<protein>
    <recommendedName>
        <fullName evidence="1">Putative transport protein APL_0966</fullName>
    </recommendedName>
</protein>
<keyword id="KW-1003">Cell membrane</keyword>
<keyword id="KW-0472">Membrane</keyword>
<keyword id="KW-1185">Reference proteome</keyword>
<keyword id="KW-0677">Repeat</keyword>
<keyword id="KW-0812">Transmembrane</keyword>
<keyword id="KW-1133">Transmembrane helix</keyword>
<keyword id="KW-0813">Transport</keyword>
<reference key="1">
    <citation type="journal article" date="2008" name="J. Bacteriol.">
        <title>The complete genome sequence of Actinobacillus pleuropneumoniae L20 (serotype 5b).</title>
        <authorList>
            <person name="Foote S.J."/>
            <person name="Bosse J.T."/>
            <person name="Bouevitch A.B."/>
            <person name="Langford P.R."/>
            <person name="Young N.M."/>
            <person name="Nash J.H.E."/>
        </authorList>
    </citation>
    <scope>NUCLEOTIDE SEQUENCE [LARGE SCALE GENOMIC DNA]</scope>
    <source>
        <strain>L20</strain>
    </source>
</reference>
<accession>A3N0X4</accession>
<feature type="chain" id="PRO_0000329156" description="Putative transport protein APL_0966">
    <location>
        <begin position="1"/>
        <end position="552"/>
    </location>
</feature>
<feature type="transmembrane region" description="Helical" evidence="1">
    <location>
        <begin position="4"/>
        <end position="24"/>
    </location>
</feature>
<feature type="transmembrane region" description="Helical" evidence="1">
    <location>
        <begin position="29"/>
        <end position="49"/>
    </location>
</feature>
<feature type="transmembrane region" description="Helical" evidence="1">
    <location>
        <begin position="65"/>
        <end position="85"/>
    </location>
</feature>
<feature type="transmembrane region" description="Helical" evidence="1">
    <location>
        <begin position="95"/>
        <end position="115"/>
    </location>
</feature>
<feature type="transmembrane region" description="Helical" evidence="1">
    <location>
        <begin position="161"/>
        <end position="181"/>
    </location>
</feature>
<feature type="transmembrane region" description="Helical" evidence="1">
    <location>
        <begin position="370"/>
        <end position="390"/>
    </location>
</feature>
<feature type="transmembrane region" description="Helical" evidence="1">
    <location>
        <begin position="402"/>
        <end position="424"/>
    </location>
</feature>
<feature type="transmembrane region" description="Helical" evidence="1">
    <location>
        <begin position="438"/>
        <end position="458"/>
    </location>
</feature>
<feature type="transmembrane region" description="Helical" evidence="1">
    <location>
        <begin position="463"/>
        <end position="483"/>
    </location>
</feature>
<feature type="transmembrane region" description="Helical" evidence="1">
    <location>
        <begin position="492"/>
        <end position="512"/>
    </location>
</feature>
<feature type="transmembrane region" description="Helical" evidence="1">
    <location>
        <begin position="529"/>
        <end position="549"/>
    </location>
</feature>
<feature type="domain" description="RCK C-terminal 1" evidence="1">
    <location>
        <begin position="190"/>
        <end position="275"/>
    </location>
</feature>
<feature type="domain" description="RCK C-terminal 2" evidence="1">
    <location>
        <begin position="277"/>
        <end position="360"/>
    </location>
</feature>
<sequence>MSDIAIIVSLLSLVAVLGLWIGHIKIKGVGLGIGGVLFGGIIISHCTHLYGIELDAHTLHFIQEFGLILFVYSIGIQVGPGFFASLRQSGLKLNGFAVMIVGLSGILVALIHKLFDVPLPVILGIFSGAVTNTPSLGAGQQVLTELGGDNITAVMGMSYAIAYPFGIIGILLSMWLIRIIFKVNIDKEAQEFDNNQNQQKEGLDTLNVRLTNPNLGGLKLKEIPDFESHTVIYSRLKRNDQLIVPNVDTVLNVGDVLHLVGEKATLRKMQLILGEEADVSVSTRGTIFRSERAVVTNENVFGKKIRHLMLKGKYEVVISRLNRAGVELIPNGEMALQFGDVLNLVGRQEDIETVRAIIGDAHQKLQQVQMLPIFVGIGLGVLLGSLPLYIPGFPVALKLGLAGGPLVVALILARIGSIGKLYWFMPPSANLALREIGIVLFLSVVGLKAGANFLDTLLSPEGLAWMGYGAIITFIPLIVTGFVARIYGKMNYLSLCGLLSGAMTDPPALAFANEIKDGHGAAALSYATVYPLVMFLRIILPQLLAILLWTAS</sequence>
<gene>
    <name type="ordered locus">APL_0966</name>
</gene>
<comment type="subcellular location">
    <subcellularLocation>
        <location evidence="1">Cell membrane</location>
        <topology evidence="1">Multi-pass membrane protein</topology>
    </subcellularLocation>
</comment>
<comment type="similarity">
    <text evidence="1">Belongs to the AAE transporter (TC 2.A.81) family. YidE subfamily.</text>
</comment>
<dbReference type="EMBL" id="CP000569">
    <property type="protein sequence ID" value="ABN74060.1"/>
    <property type="molecule type" value="Genomic_DNA"/>
</dbReference>
<dbReference type="RefSeq" id="WP_009875252.1">
    <property type="nucleotide sequence ID" value="NC_009053.1"/>
</dbReference>
<dbReference type="SMR" id="A3N0X4"/>
<dbReference type="STRING" id="416269.APL_0966"/>
<dbReference type="EnsemblBacteria" id="ABN74060">
    <property type="protein sequence ID" value="ABN74060"/>
    <property type="gene ID" value="APL_0966"/>
</dbReference>
<dbReference type="KEGG" id="apl:APL_0966"/>
<dbReference type="eggNOG" id="COG0569">
    <property type="taxonomic scope" value="Bacteria"/>
</dbReference>
<dbReference type="eggNOG" id="COG2985">
    <property type="taxonomic scope" value="Bacteria"/>
</dbReference>
<dbReference type="HOGENOM" id="CLU_035023_3_1_6"/>
<dbReference type="Proteomes" id="UP000001432">
    <property type="component" value="Chromosome"/>
</dbReference>
<dbReference type="GO" id="GO:0005886">
    <property type="term" value="C:plasma membrane"/>
    <property type="evidence" value="ECO:0007669"/>
    <property type="project" value="UniProtKB-SubCell"/>
</dbReference>
<dbReference type="GO" id="GO:0008324">
    <property type="term" value="F:monoatomic cation transmembrane transporter activity"/>
    <property type="evidence" value="ECO:0007669"/>
    <property type="project" value="InterPro"/>
</dbReference>
<dbReference type="GO" id="GO:0006813">
    <property type="term" value="P:potassium ion transport"/>
    <property type="evidence" value="ECO:0007669"/>
    <property type="project" value="InterPro"/>
</dbReference>
<dbReference type="Gene3D" id="3.30.70.1450">
    <property type="entry name" value="Regulator of K+ conductance, C-terminal domain"/>
    <property type="match status" value="2"/>
</dbReference>
<dbReference type="HAMAP" id="MF_01016">
    <property type="entry name" value="YidE"/>
    <property type="match status" value="1"/>
</dbReference>
<dbReference type="InterPro" id="IPR050144">
    <property type="entry name" value="AAE_transporter"/>
</dbReference>
<dbReference type="InterPro" id="IPR006037">
    <property type="entry name" value="RCK_C"/>
</dbReference>
<dbReference type="InterPro" id="IPR036721">
    <property type="entry name" value="RCK_C_sf"/>
</dbReference>
<dbReference type="InterPro" id="IPR023018">
    <property type="entry name" value="Transpt_YidE_put"/>
</dbReference>
<dbReference type="InterPro" id="IPR006512">
    <property type="entry name" value="YidE_YbjL"/>
</dbReference>
<dbReference type="NCBIfam" id="NF003007">
    <property type="entry name" value="PRK03818.1"/>
    <property type="match status" value="1"/>
</dbReference>
<dbReference type="NCBIfam" id="TIGR01625">
    <property type="entry name" value="YidE_YbjL_dupl"/>
    <property type="match status" value="2"/>
</dbReference>
<dbReference type="PANTHER" id="PTHR30445">
    <property type="entry name" value="K(+)_H(+) ANTIPORTER SUBUNIT KHTT"/>
    <property type="match status" value="1"/>
</dbReference>
<dbReference type="PANTHER" id="PTHR30445:SF3">
    <property type="entry name" value="TRANSPORT PROTEIN YIDE-RELATED"/>
    <property type="match status" value="1"/>
</dbReference>
<dbReference type="Pfam" id="PF06826">
    <property type="entry name" value="Asp-Al_Ex"/>
    <property type="match status" value="2"/>
</dbReference>
<dbReference type="Pfam" id="PF02080">
    <property type="entry name" value="TrkA_C"/>
    <property type="match status" value="2"/>
</dbReference>
<dbReference type="SUPFAM" id="SSF116726">
    <property type="entry name" value="TrkA C-terminal domain-like"/>
    <property type="match status" value="2"/>
</dbReference>
<dbReference type="PROSITE" id="PS51202">
    <property type="entry name" value="RCK_C"/>
    <property type="match status" value="2"/>
</dbReference>
<proteinExistence type="inferred from homology"/>
<evidence type="ECO:0000255" key="1">
    <source>
        <dbReference type="HAMAP-Rule" id="MF_01016"/>
    </source>
</evidence>